<accession>P21157</accession>
<dbReference type="EMBL" id="X53509">
    <property type="protein sequence ID" value="CAA37586.1"/>
    <property type="molecule type" value="Genomic_DNA"/>
</dbReference>
<dbReference type="PIR" id="B43995">
    <property type="entry name" value="B43995"/>
</dbReference>
<dbReference type="SMR" id="P21157"/>
<dbReference type="UniPathway" id="UPA00148"/>
<dbReference type="GO" id="GO:0003824">
    <property type="term" value="F:catalytic activity"/>
    <property type="evidence" value="ECO:0007669"/>
    <property type="project" value="InterPro"/>
</dbReference>
<dbReference type="GO" id="GO:0009236">
    <property type="term" value="P:cobalamin biosynthetic process"/>
    <property type="evidence" value="ECO:0007669"/>
    <property type="project" value="UniProtKB-UniPathway"/>
</dbReference>
<dbReference type="CDD" id="cd05389">
    <property type="entry name" value="CobQ_N"/>
    <property type="match status" value="1"/>
</dbReference>
<dbReference type="Gene3D" id="3.40.50.300">
    <property type="entry name" value="P-loop containing nucleotide triphosphate hydrolases"/>
    <property type="match status" value="1"/>
</dbReference>
<dbReference type="HAMAP" id="MF_00028">
    <property type="entry name" value="CobQ"/>
    <property type="match status" value="1"/>
</dbReference>
<dbReference type="InterPro" id="IPR002586">
    <property type="entry name" value="CobQ/CobB/MinD/ParA_Nub-bd_dom"/>
</dbReference>
<dbReference type="InterPro" id="IPR047045">
    <property type="entry name" value="CobQ_N"/>
</dbReference>
<dbReference type="InterPro" id="IPR004459">
    <property type="entry name" value="CobQ_synth"/>
</dbReference>
<dbReference type="InterPro" id="IPR027417">
    <property type="entry name" value="P-loop_NTPase"/>
</dbReference>
<dbReference type="NCBIfam" id="TIGR00313">
    <property type="entry name" value="cobQ"/>
    <property type="match status" value="1"/>
</dbReference>
<dbReference type="NCBIfam" id="NF001989">
    <property type="entry name" value="PRK00784.1"/>
    <property type="match status" value="1"/>
</dbReference>
<dbReference type="PANTHER" id="PTHR21343:SF1">
    <property type="entry name" value="COBYRIC ACID SYNTHASE"/>
    <property type="match status" value="1"/>
</dbReference>
<dbReference type="PANTHER" id="PTHR21343">
    <property type="entry name" value="DETHIOBIOTIN SYNTHETASE"/>
    <property type="match status" value="1"/>
</dbReference>
<dbReference type="Pfam" id="PF01656">
    <property type="entry name" value="CbiA"/>
    <property type="match status" value="1"/>
</dbReference>
<dbReference type="SUPFAM" id="SSF52540">
    <property type="entry name" value="P-loop containing nucleoside triphosphate hydrolases"/>
    <property type="match status" value="1"/>
</dbReference>
<proteinExistence type="inferred from homology"/>
<evidence type="ECO:0000250" key="1"/>
<evidence type="ECO:0000305" key="2"/>
<protein>
    <recommendedName>
        <fullName>Probable cobyric acid synthase</fullName>
    </recommendedName>
</protein>
<keyword id="KW-0169">Cobalamin biosynthesis</keyword>
<keyword id="KW-0315">Glutamine amidotransferase</keyword>
<organism>
    <name type="scientific">Methanococcus voltae</name>
    <dbReference type="NCBI Taxonomy" id="2188"/>
    <lineage>
        <taxon>Archaea</taxon>
        <taxon>Methanobacteriati</taxon>
        <taxon>Methanobacteriota</taxon>
        <taxon>Methanomada group</taxon>
        <taxon>Methanococci</taxon>
        <taxon>Methanococcales</taxon>
        <taxon>Methanococcaceae</taxon>
        <taxon>Methanococcus</taxon>
    </lineage>
</organism>
<comment type="function">
    <text evidence="1">Catalyzes amidations at positions B, D, E, and G on adenosylcobyrinic A,C-diamide. NH(2) groups are provided by glutamine, and one molecule of ATP is hydrogenolyzed for each amidation (By similarity).</text>
</comment>
<comment type="pathway">
    <text>Cofactor biosynthesis; adenosylcobalamin biosynthesis.</text>
</comment>
<comment type="similarity">
    <text evidence="2">Belongs to the CobB/CobQ family. CobQ subfamily.</text>
</comment>
<name>COBQ_METVO</name>
<feature type="chain" id="PRO_0000141353" description="Probable cobyric acid synthase">
    <location>
        <begin position="1"/>
        <end position="229" status="greater than"/>
    </location>
</feature>
<feature type="non-terminal residue">
    <location>
        <position position="229"/>
    </location>
</feature>
<reference key="1">
    <citation type="journal article" date="1989" name="Res. Microbiol.">
        <title>Nucleotide sequence and expression of the glutamine synthetase structural gene, glnA, of the archaebacterium Methanococcus voltae.</title>
        <authorList>
            <person name="Possot O."/>
            <person name="Sibold L."/>
            <person name="Aubert J.-P."/>
        </authorList>
    </citation>
    <scope>NUCLEOTIDE SEQUENCE [GENOMIC DNA]</scope>
    <source>
        <strain>ATCC 33273 / DSM 1537 / NBRC 100457 / OCM 70 / PS</strain>
    </source>
</reference>
<reference key="2">
    <citation type="journal article" date="1995" name="Nucleic Acids Res.">
        <title>Novel protein families in archaean genomes.</title>
        <authorList>
            <person name="Ouzounis C."/>
            <person name="Kyrpides N."/>
            <person name="Sander C."/>
        </authorList>
    </citation>
    <scope>SIMILARITY</scope>
</reference>
<sequence>MAKFIMVAGTASNSGKTVMVSGICRMLANKGYKVAPFKSENMSLNSRVSVEDGEIAVAQYTQSVAAKVEPSTHFNPVLLKPKGNFTSQVIIHGKPYKNLDYNEYRNEKDYCIEKIKESLDYLNKNYDYVIMEGAGSCCEINLLEDDIANLRVAEMANADVLLVSDIDRGGVFASLYGTVELLPENWRKLIKGFIINKFRGNADVLTDGFKKITELTNIDVAGLIPYDES</sequence>
<gene>
    <name type="primary">cobQ</name>
</gene>